<keyword id="KW-0256">Endoplasmic reticulum</keyword>
<keyword id="KW-0325">Glycoprotein</keyword>
<keyword id="KW-0378">Hydrolase</keyword>
<keyword id="KW-0472">Membrane</keyword>
<keyword id="KW-0653">Protein transport</keyword>
<keyword id="KW-1185">Reference proteome</keyword>
<keyword id="KW-0812">Transmembrane</keyword>
<keyword id="KW-1133">Transmembrane helix</keyword>
<keyword id="KW-0813">Transport</keyword>
<proteinExistence type="evidence at transcript level"/>
<feature type="chain" id="PRO_0000277627" description="GPI inositol-deacylase">
    <location>
        <begin position="1"/>
        <end position="980"/>
    </location>
</feature>
<feature type="topological domain" description="Cytoplasmic" evidence="2">
    <location>
        <begin position="1"/>
        <end position="7"/>
    </location>
</feature>
<feature type="transmembrane region" description="Helical" evidence="2">
    <location>
        <begin position="8"/>
        <end position="28"/>
    </location>
</feature>
<feature type="topological domain" description="Lumenal" evidence="2">
    <location>
        <begin position="29"/>
        <end position="628"/>
    </location>
</feature>
<feature type="transmembrane region" description="Helical" evidence="2">
    <location>
        <begin position="629"/>
        <end position="649"/>
    </location>
</feature>
<feature type="topological domain" description="Cytoplasmic" evidence="2">
    <location>
        <begin position="650"/>
        <end position="709"/>
    </location>
</feature>
<feature type="transmembrane region" description="Helical" evidence="2">
    <location>
        <begin position="710"/>
        <end position="730"/>
    </location>
</feature>
<feature type="topological domain" description="Lumenal" evidence="2">
    <location>
        <begin position="731"/>
        <end position="774"/>
    </location>
</feature>
<feature type="transmembrane region" description="Helical" evidence="2">
    <location>
        <begin position="775"/>
        <end position="795"/>
    </location>
</feature>
<feature type="topological domain" description="Cytoplasmic" evidence="2">
    <location>
        <begin position="796"/>
        <end position="867"/>
    </location>
</feature>
<feature type="transmembrane region" description="Helical" evidence="2">
    <location>
        <begin position="868"/>
        <end position="888"/>
    </location>
</feature>
<feature type="topological domain" description="Lumenal" evidence="2">
    <location>
        <begin position="889"/>
        <end position="895"/>
    </location>
</feature>
<feature type="transmembrane region" description="Helical" evidence="2">
    <location>
        <begin position="896"/>
        <end position="916"/>
    </location>
</feature>
<feature type="topological domain" description="Cytoplasmic" evidence="2">
    <location>
        <begin position="917"/>
        <end position="929"/>
    </location>
</feature>
<feature type="transmembrane region" description="Helical" evidence="2">
    <location>
        <begin position="930"/>
        <end position="950"/>
    </location>
</feature>
<feature type="topological domain" description="Lumenal" evidence="2">
    <location>
        <begin position="951"/>
        <end position="954"/>
    </location>
</feature>
<feature type="transmembrane region" description="Helical" evidence="2">
    <location>
        <begin position="955"/>
        <end position="975"/>
    </location>
</feature>
<feature type="topological domain" description="Cytoplasmic" evidence="2">
    <location>
        <begin position="976"/>
        <end position="980"/>
    </location>
</feature>
<feature type="region of interest" description="Disordered" evidence="3">
    <location>
        <begin position="821"/>
        <end position="853"/>
    </location>
</feature>
<feature type="compositionally biased region" description="Acidic residues" evidence="3">
    <location>
        <begin position="824"/>
        <end position="834"/>
    </location>
</feature>
<feature type="active site" evidence="1">
    <location>
        <position position="170"/>
    </location>
</feature>
<feature type="glycosylation site" description="N-linked (GlcNAc...) asparagine" evidence="2">
    <location>
        <position position="427"/>
    </location>
</feature>
<feature type="glycosylation site" description="N-linked (GlcNAc...) asparagine" evidence="2">
    <location>
        <position position="517"/>
    </location>
</feature>
<feature type="glycosylation site" description="N-linked (GlcNAc...) asparagine" evidence="2">
    <location>
        <position position="596"/>
    </location>
</feature>
<feature type="sequence conflict" description="In Ref. 3; AAL68379." evidence="4" ref="3">
    <original>L</original>
    <variation>V</variation>
    <location>
        <position position="459"/>
    </location>
</feature>
<feature type="sequence conflict" description="In Ref. 3; AAL68379." evidence="4" ref="3">
    <original>E</original>
    <variation>D</variation>
    <location>
        <position position="605"/>
    </location>
</feature>
<sequence length="980" mass="111625">MFMFRNCAVLLVIGSICCFIYGLFRLHVEVEPNACRMTYMFGEPMFAKVGVRDGDQYPNYALYYYYEGLRQPLDPLKRRMTGAPVIFVPGNAGSYKQVRSLASVALRKAMSNDAGIHLDYYTIDYDEELSALYGGYLHRQQSYLKLCIRTILSIYEGRTEQPSIVLIGHSMGGKLAQSVLVDPAIGQHINTIISISTPLDQPVLNLDTQLEEFYDQTDAVLSKLRTATVPTMTTNVCDSLHQRPPSVQRMASQDSSARLDNVLLISTGGGNRDLLVRPGLTSSRFNDLHAMTSAIPKVSLSCDHLSAVWCLQFMQAINRFLFSVAYVREDRSSIAFGTNKQRNLQTALSTFVKPRRRQQNTVRFGAAGNWHEERRLVINKYFTNGLKGTFFDLIGLQRQERYRKAAIEALNVDDEDWLFGCSAEDNNKTGQLYCEKATSLMHLVQWLPNEDREPRSIALLDLHNLRKTYVHWTHLLVRLPPSAKRIGYNLDIYDPKERVTDIKMPRWYTMAKLPLINETLQGTLHHRVRISEMVDPYQSIRVIVEPLQCINPEYRVTARICVPWAAGFERFQTLKSFDQKPQLYVNVPTLVPRHYNTTLNPVTLELYLDPTCRYRISYEYSYSSALSRLVLEFYGWLPAHLVCVLLIVLRKQVETFYDVGTFRSLRPYVGYLQYTSLYIVTACRLLKKLIISSRVFPEPEPLDYSINVSIVIHCAAIALSLLATLGTWLALTLYGNAFYRLALRITRLSQATSNVMISIMTHLPITYGILTIATAMGTCSGVGLLLAFVFYFLMLSNAYKDYLEDFLWQKAANLVRGKPSAVTEQEDATEEQNEEQNALKQNDEQKQQQQEEEEPEACVGLQNFSFHVTLLLMLFVQLLLNAPSSLAWLRSRRHGINLPDPSLYPSIVVLASLSLLLQLRAPQKCQGYWMLSIAFYILAGVVLLYCQAAIYRLTYVIAGAFALLSAHQSLWILWGRVSRV</sequence>
<reference key="1">
    <citation type="journal article" date="2000" name="Science">
        <title>The genome sequence of Drosophila melanogaster.</title>
        <authorList>
            <person name="Adams M.D."/>
            <person name="Celniker S.E."/>
            <person name="Holt R.A."/>
            <person name="Evans C.A."/>
            <person name="Gocayne J.D."/>
            <person name="Amanatides P.G."/>
            <person name="Scherer S.E."/>
            <person name="Li P.W."/>
            <person name="Hoskins R.A."/>
            <person name="Galle R.F."/>
            <person name="George R.A."/>
            <person name="Lewis S.E."/>
            <person name="Richards S."/>
            <person name="Ashburner M."/>
            <person name="Henderson S.N."/>
            <person name="Sutton G.G."/>
            <person name="Wortman J.R."/>
            <person name="Yandell M.D."/>
            <person name="Zhang Q."/>
            <person name="Chen L.X."/>
            <person name="Brandon R.C."/>
            <person name="Rogers Y.-H.C."/>
            <person name="Blazej R.G."/>
            <person name="Champe M."/>
            <person name="Pfeiffer B.D."/>
            <person name="Wan K.H."/>
            <person name="Doyle C."/>
            <person name="Baxter E.G."/>
            <person name="Helt G."/>
            <person name="Nelson C.R."/>
            <person name="Miklos G.L.G."/>
            <person name="Abril J.F."/>
            <person name="Agbayani A."/>
            <person name="An H.-J."/>
            <person name="Andrews-Pfannkoch C."/>
            <person name="Baldwin D."/>
            <person name="Ballew R.M."/>
            <person name="Basu A."/>
            <person name="Baxendale J."/>
            <person name="Bayraktaroglu L."/>
            <person name="Beasley E.M."/>
            <person name="Beeson K.Y."/>
            <person name="Benos P.V."/>
            <person name="Berman B.P."/>
            <person name="Bhandari D."/>
            <person name="Bolshakov S."/>
            <person name="Borkova D."/>
            <person name="Botchan M.R."/>
            <person name="Bouck J."/>
            <person name="Brokstein P."/>
            <person name="Brottier P."/>
            <person name="Burtis K.C."/>
            <person name="Busam D.A."/>
            <person name="Butler H."/>
            <person name="Cadieu E."/>
            <person name="Center A."/>
            <person name="Chandra I."/>
            <person name="Cherry J.M."/>
            <person name="Cawley S."/>
            <person name="Dahlke C."/>
            <person name="Davenport L.B."/>
            <person name="Davies P."/>
            <person name="de Pablos B."/>
            <person name="Delcher A."/>
            <person name="Deng Z."/>
            <person name="Mays A.D."/>
            <person name="Dew I."/>
            <person name="Dietz S.M."/>
            <person name="Dodson K."/>
            <person name="Doup L.E."/>
            <person name="Downes M."/>
            <person name="Dugan-Rocha S."/>
            <person name="Dunkov B.C."/>
            <person name="Dunn P."/>
            <person name="Durbin K.J."/>
            <person name="Evangelista C.C."/>
            <person name="Ferraz C."/>
            <person name="Ferriera S."/>
            <person name="Fleischmann W."/>
            <person name="Fosler C."/>
            <person name="Gabrielian A.E."/>
            <person name="Garg N.S."/>
            <person name="Gelbart W.M."/>
            <person name="Glasser K."/>
            <person name="Glodek A."/>
            <person name="Gong F."/>
            <person name="Gorrell J.H."/>
            <person name="Gu Z."/>
            <person name="Guan P."/>
            <person name="Harris M."/>
            <person name="Harris N.L."/>
            <person name="Harvey D.A."/>
            <person name="Heiman T.J."/>
            <person name="Hernandez J.R."/>
            <person name="Houck J."/>
            <person name="Hostin D."/>
            <person name="Houston K.A."/>
            <person name="Howland T.J."/>
            <person name="Wei M.-H."/>
            <person name="Ibegwam C."/>
            <person name="Jalali M."/>
            <person name="Kalush F."/>
            <person name="Karpen G.H."/>
            <person name="Ke Z."/>
            <person name="Kennison J.A."/>
            <person name="Ketchum K.A."/>
            <person name="Kimmel B.E."/>
            <person name="Kodira C.D."/>
            <person name="Kraft C.L."/>
            <person name="Kravitz S."/>
            <person name="Kulp D."/>
            <person name="Lai Z."/>
            <person name="Lasko P."/>
            <person name="Lei Y."/>
            <person name="Levitsky A.A."/>
            <person name="Li J.H."/>
            <person name="Li Z."/>
            <person name="Liang Y."/>
            <person name="Lin X."/>
            <person name="Liu X."/>
            <person name="Mattei B."/>
            <person name="McIntosh T.C."/>
            <person name="McLeod M.P."/>
            <person name="McPherson D."/>
            <person name="Merkulov G."/>
            <person name="Milshina N.V."/>
            <person name="Mobarry C."/>
            <person name="Morris J."/>
            <person name="Moshrefi A."/>
            <person name="Mount S.M."/>
            <person name="Moy M."/>
            <person name="Murphy B."/>
            <person name="Murphy L."/>
            <person name="Muzny D.M."/>
            <person name="Nelson D.L."/>
            <person name="Nelson D.R."/>
            <person name="Nelson K.A."/>
            <person name="Nixon K."/>
            <person name="Nusskern D.R."/>
            <person name="Pacleb J.M."/>
            <person name="Palazzolo M."/>
            <person name="Pittman G.S."/>
            <person name="Pan S."/>
            <person name="Pollard J."/>
            <person name="Puri V."/>
            <person name="Reese M.G."/>
            <person name="Reinert K."/>
            <person name="Remington K."/>
            <person name="Saunders R.D.C."/>
            <person name="Scheeler F."/>
            <person name="Shen H."/>
            <person name="Shue B.C."/>
            <person name="Siden-Kiamos I."/>
            <person name="Simpson M."/>
            <person name="Skupski M.P."/>
            <person name="Smith T.J."/>
            <person name="Spier E."/>
            <person name="Spradling A.C."/>
            <person name="Stapleton M."/>
            <person name="Strong R."/>
            <person name="Sun E."/>
            <person name="Svirskas R."/>
            <person name="Tector C."/>
            <person name="Turner R."/>
            <person name="Venter E."/>
            <person name="Wang A.H."/>
            <person name="Wang X."/>
            <person name="Wang Z.-Y."/>
            <person name="Wassarman D.A."/>
            <person name="Weinstock G.M."/>
            <person name="Weissenbach J."/>
            <person name="Williams S.M."/>
            <person name="Woodage T."/>
            <person name="Worley K.C."/>
            <person name="Wu D."/>
            <person name="Yang S."/>
            <person name="Yao Q.A."/>
            <person name="Ye J."/>
            <person name="Yeh R.-F."/>
            <person name="Zaveri J.S."/>
            <person name="Zhan M."/>
            <person name="Zhang G."/>
            <person name="Zhao Q."/>
            <person name="Zheng L."/>
            <person name="Zheng X.H."/>
            <person name="Zhong F.N."/>
            <person name="Zhong W."/>
            <person name="Zhou X."/>
            <person name="Zhu S.C."/>
            <person name="Zhu X."/>
            <person name="Smith H.O."/>
            <person name="Gibbs R.A."/>
            <person name="Myers E.W."/>
            <person name="Rubin G.M."/>
            <person name="Venter J.C."/>
        </authorList>
    </citation>
    <scope>NUCLEOTIDE SEQUENCE [LARGE SCALE GENOMIC DNA]</scope>
    <source>
        <strain>Berkeley</strain>
    </source>
</reference>
<reference key="2">
    <citation type="journal article" date="2002" name="Genome Biol.">
        <title>Annotation of the Drosophila melanogaster euchromatic genome: a systematic review.</title>
        <authorList>
            <person name="Misra S."/>
            <person name="Crosby M.A."/>
            <person name="Mungall C.J."/>
            <person name="Matthews B.B."/>
            <person name="Campbell K.S."/>
            <person name="Hradecky P."/>
            <person name="Huang Y."/>
            <person name="Kaminker J.S."/>
            <person name="Millburn G.H."/>
            <person name="Prochnik S.E."/>
            <person name="Smith C.D."/>
            <person name="Tupy J.L."/>
            <person name="Whitfield E.J."/>
            <person name="Bayraktaroglu L."/>
            <person name="Berman B.P."/>
            <person name="Bettencourt B.R."/>
            <person name="Celniker S.E."/>
            <person name="de Grey A.D.N.J."/>
            <person name="Drysdale R.A."/>
            <person name="Harris N.L."/>
            <person name="Richter J."/>
            <person name="Russo S."/>
            <person name="Schroeder A.J."/>
            <person name="Shu S.Q."/>
            <person name="Stapleton M."/>
            <person name="Yamada C."/>
            <person name="Ashburner M."/>
            <person name="Gelbart W.M."/>
            <person name="Rubin G.M."/>
            <person name="Lewis S.E."/>
        </authorList>
    </citation>
    <scope>GENOME REANNOTATION</scope>
    <source>
        <strain>Berkeley</strain>
    </source>
</reference>
<reference key="3">
    <citation type="journal article" date="2002" name="Genome Biol.">
        <title>A Drosophila full-length cDNA resource.</title>
        <authorList>
            <person name="Stapleton M."/>
            <person name="Carlson J.W."/>
            <person name="Brokstein P."/>
            <person name="Yu C."/>
            <person name="Champe M."/>
            <person name="George R.A."/>
            <person name="Guarin H."/>
            <person name="Kronmiller B."/>
            <person name="Pacleb J.M."/>
            <person name="Park S."/>
            <person name="Wan K.H."/>
            <person name="Rubin G.M."/>
            <person name="Celniker S.E."/>
        </authorList>
    </citation>
    <scope>NUCLEOTIDE SEQUENCE [LARGE SCALE MRNA]</scope>
    <source>
        <strain>Berkeley</strain>
        <tissue>Embryo</tissue>
    </source>
</reference>
<gene>
    <name evidence="5" type="primary">PGAP1</name>
    <name evidence="5" type="ORF">CG3160</name>
</gene>
<name>PGAP1_DROME</name>
<evidence type="ECO:0000250" key="1"/>
<evidence type="ECO:0000255" key="2"/>
<evidence type="ECO:0000256" key="3">
    <source>
        <dbReference type="SAM" id="MobiDB-lite"/>
    </source>
</evidence>
<evidence type="ECO:0000305" key="4"/>
<evidence type="ECO:0000312" key="5">
    <source>
        <dbReference type="FlyBase" id="FBgn0029789"/>
    </source>
</evidence>
<organism>
    <name type="scientific">Drosophila melanogaster</name>
    <name type="common">Fruit fly</name>
    <dbReference type="NCBI Taxonomy" id="7227"/>
    <lineage>
        <taxon>Eukaryota</taxon>
        <taxon>Metazoa</taxon>
        <taxon>Ecdysozoa</taxon>
        <taxon>Arthropoda</taxon>
        <taxon>Hexapoda</taxon>
        <taxon>Insecta</taxon>
        <taxon>Pterygota</taxon>
        <taxon>Neoptera</taxon>
        <taxon>Endopterygota</taxon>
        <taxon>Diptera</taxon>
        <taxon>Brachycera</taxon>
        <taxon>Muscomorpha</taxon>
        <taxon>Ephydroidea</taxon>
        <taxon>Drosophilidae</taxon>
        <taxon>Drosophila</taxon>
        <taxon>Sophophora</taxon>
    </lineage>
</organism>
<dbReference type="EC" id="3.1.-.-"/>
<dbReference type="EMBL" id="AE014298">
    <property type="protein sequence ID" value="AAF46062.3"/>
    <property type="molecule type" value="Genomic_DNA"/>
</dbReference>
<dbReference type="EMBL" id="AY075574">
    <property type="protein sequence ID" value="AAL68379.1"/>
    <property type="molecule type" value="mRNA"/>
</dbReference>
<dbReference type="RefSeq" id="NP_572245.1">
    <property type="nucleotide sequence ID" value="NM_132017.2"/>
</dbReference>
<dbReference type="SMR" id="Q9W495"/>
<dbReference type="BioGRID" id="57990">
    <property type="interactions" value="3"/>
</dbReference>
<dbReference type="FunCoup" id="Q9W495">
    <property type="interactions" value="1272"/>
</dbReference>
<dbReference type="IntAct" id="Q9W495">
    <property type="interactions" value="5"/>
</dbReference>
<dbReference type="STRING" id="7227.FBpp0070812"/>
<dbReference type="ESTHER" id="drome-CG3160">
    <property type="family name" value="PGAP1"/>
</dbReference>
<dbReference type="GlyCosmos" id="Q9W495">
    <property type="glycosylation" value="3 sites, No reported glycans"/>
</dbReference>
<dbReference type="GlyGen" id="Q9W495">
    <property type="glycosylation" value="3 sites"/>
</dbReference>
<dbReference type="PaxDb" id="7227-FBpp0070812"/>
<dbReference type="EnsemblMetazoa" id="FBtr0070847">
    <property type="protein sequence ID" value="FBpp0070812"/>
    <property type="gene ID" value="FBgn0029789"/>
</dbReference>
<dbReference type="GeneID" id="31487"/>
<dbReference type="KEGG" id="dme:Dmel_CG3160"/>
<dbReference type="UCSC" id="CG3160-RA">
    <property type="organism name" value="d. melanogaster"/>
</dbReference>
<dbReference type="AGR" id="FB:FBgn0029789"/>
<dbReference type="CTD" id="80055"/>
<dbReference type="FlyBase" id="FBgn0029789">
    <property type="gene designation" value="PGAP1"/>
</dbReference>
<dbReference type="VEuPathDB" id="VectorBase:FBgn0029789"/>
<dbReference type="eggNOG" id="KOG3724">
    <property type="taxonomic scope" value="Eukaryota"/>
</dbReference>
<dbReference type="GeneTree" id="ENSGT00940000167854"/>
<dbReference type="HOGENOM" id="CLU_013735_1_0_1"/>
<dbReference type="InParanoid" id="Q9W495"/>
<dbReference type="OMA" id="YGLYYYY"/>
<dbReference type="OrthoDB" id="348976at2759"/>
<dbReference type="PhylomeDB" id="Q9W495"/>
<dbReference type="BioGRID-ORCS" id="31487">
    <property type="hits" value="0 hits in 1 CRISPR screen"/>
</dbReference>
<dbReference type="GenomeRNAi" id="31487"/>
<dbReference type="PRO" id="PR:Q9W495"/>
<dbReference type="Proteomes" id="UP000000803">
    <property type="component" value="Chromosome X"/>
</dbReference>
<dbReference type="Bgee" id="FBgn0029789">
    <property type="expression patterns" value="Expressed in T neuron T5c (Drosophila) in embryonic/larval optic lobe (Drosophila) and 39 other cell types or tissues"/>
</dbReference>
<dbReference type="GO" id="GO:0005783">
    <property type="term" value="C:endoplasmic reticulum"/>
    <property type="evidence" value="ECO:0000250"/>
    <property type="project" value="UniProtKB"/>
</dbReference>
<dbReference type="GO" id="GO:0005789">
    <property type="term" value="C:endoplasmic reticulum membrane"/>
    <property type="evidence" value="ECO:0007669"/>
    <property type="project" value="UniProtKB-SubCell"/>
</dbReference>
<dbReference type="GO" id="GO:0160215">
    <property type="term" value="F:deacylase activity"/>
    <property type="evidence" value="ECO:0000250"/>
    <property type="project" value="UniProtKB"/>
</dbReference>
<dbReference type="GO" id="GO:0050185">
    <property type="term" value="F:phosphatidylinositol deacylase activity"/>
    <property type="evidence" value="ECO:0000318"/>
    <property type="project" value="GO_Central"/>
</dbReference>
<dbReference type="GO" id="GO:0006506">
    <property type="term" value="P:GPI anchor biosynthetic process"/>
    <property type="evidence" value="ECO:0000318"/>
    <property type="project" value="GO_Central"/>
</dbReference>
<dbReference type="GO" id="GO:1902953">
    <property type="term" value="P:positive regulation of ER to Golgi vesicle-mediated transport"/>
    <property type="evidence" value="ECO:0000250"/>
    <property type="project" value="UniProtKB"/>
</dbReference>
<dbReference type="GO" id="GO:0015031">
    <property type="term" value="P:protein transport"/>
    <property type="evidence" value="ECO:0007669"/>
    <property type="project" value="UniProtKB-KW"/>
</dbReference>
<dbReference type="Gene3D" id="3.40.50.1820">
    <property type="entry name" value="alpha/beta hydrolase"/>
    <property type="match status" value="1"/>
</dbReference>
<dbReference type="InterPro" id="IPR029058">
    <property type="entry name" value="AB_hydrolase_fold"/>
</dbReference>
<dbReference type="InterPro" id="IPR012908">
    <property type="entry name" value="PGAP1-ab_dom-like"/>
</dbReference>
<dbReference type="InterPro" id="IPR039529">
    <property type="entry name" value="PGAP1/BST1"/>
</dbReference>
<dbReference type="PANTHER" id="PTHR15495:SF7">
    <property type="entry name" value="GPI INOSITOL-DEACYLASE"/>
    <property type="match status" value="1"/>
</dbReference>
<dbReference type="PANTHER" id="PTHR15495">
    <property type="entry name" value="NEGATIVE REGULATOR OF VESICLE FORMATION-RELATED"/>
    <property type="match status" value="1"/>
</dbReference>
<dbReference type="Pfam" id="PF07819">
    <property type="entry name" value="PGAP1"/>
    <property type="match status" value="1"/>
</dbReference>
<dbReference type="Pfam" id="PF24660">
    <property type="entry name" value="PGAP1_3rd"/>
    <property type="match status" value="1"/>
</dbReference>
<dbReference type="SUPFAM" id="SSF53474">
    <property type="entry name" value="alpha/beta-Hydrolases"/>
    <property type="match status" value="1"/>
</dbReference>
<dbReference type="PROSITE" id="PS00120">
    <property type="entry name" value="LIPASE_SER"/>
    <property type="match status" value="1"/>
</dbReference>
<accession>Q9W495</accession>
<accession>Q8T8Q8</accession>
<protein>
    <recommendedName>
        <fullName>GPI inositol-deacylase</fullName>
        <ecNumber>3.1.-.-</ecNumber>
    </recommendedName>
    <alternativeName>
        <fullName>Post-GPI attachment to proteins factor 1</fullName>
    </alternativeName>
</protein>
<comment type="function">
    <text evidence="1">Involved in inositol deacylation of GPI-anchored proteins.</text>
</comment>
<comment type="subcellular location">
    <subcellularLocation>
        <location evidence="1">Endoplasmic reticulum membrane</location>
        <topology evidence="1">Multi-pass membrane protein</topology>
    </subcellularLocation>
</comment>
<comment type="similarity">
    <text evidence="4">Belongs to the GPI inositol-deacylase family.</text>
</comment>